<keyword id="KW-0963">Cytoplasm</keyword>
<keyword id="KW-0489">Methyltransferase</keyword>
<keyword id="KW-0694">RNA-binding</keyword>
<keyword id="KW-0698">rRNA processing</keyword>
<keyword id="KW-0949">S-adenosyl-L-methionine</keyword>
<keyword id="KW-0808">Transferase</keyword>
<dbReference type="EC" id="2.1.1.182" evidence="1"/>
<dbReference type="EMBL" id="CP000947">
    <property type="protein sequence ID" value="ACA32110.1"/>
    <property type="molecule type" value="Genomic_DNA"/>
</dbReference>
<dbReference type="RefSeq" id="WP_011609705.1">
    <property type="nucleotide sequence ID" value="NC_010519.1"/>
</dbReference>
<dbReference type="SMR" id="B0URM7"/>
<dbReference type="STRING" id="228400.HSM_0465"/>
<dbReference type="GeneID" id="31486748"/>
<dbReference type="KEGG" id="hsm:HSM_0465"/>
<dbReference type="HOGENOM" id="CLU_041220_0_1_6"/>
<dbReference type="GO" id="GO:0005829">
    <property type="term" value="C:cytosol"/>
    <property type="evidence" value="ECO:0007669"/>
    <property type="project" value="TreeGrafter"/>
</dbReference>
<dbReference type="GO" id="GO:0052908">
    <property type="term" value="F:16S rRNA (adenine(1518)-N(6)/adenine(1519)-N(6))-dimethyltransferase activity"/>
    <property type="evidence" value="ECO:0007669"/>
    <property type="project" value="UniProtKB-EC"/>
</dbReference>
<dbReference type="GO" id="GO:0003723">
    <property type="term" value="F:RNA binding"/>
    <property type="evidence" value="ECO:0007669"/>
    <property type="project" value="UniProtKB-KW"/>
</dbReference>
<dbReference type="FunFam" id="1.10.8.100:FF:000001">
    <property type="entry name" value="Ribosomal RNA small subunit methyltransferase A"/>
    <property type="match status" value="1"/>
</dbReference>
<dbReference type="FunFam" id="3.40.50.150:FF:000006">
    <property type="entry name" value="Ribosomal RNA small subunit methyltransferase A"/>
    <property type="match status" value="1"/>
</dbReference>
<dbReference type="Gene3D" id="1.10.8.100">
    <property type="entry name" value="Ribosomal RNA adenine dimethylase-like, domain 2"/>
    <property type="match status" value="1"/>
</dbReference>
<dbReference type="Gene3D" id="3.40.50.150">
    <property type="entry name" value="Vaccinia Virus protein VP39"/>
    <property type="match status" value="1"/>
</dbReference>
<dbReference type="HAMAP" id="MF_00607">
    <property type="entry name" value="16SrRNA_methyltr_A"/>
    <property type="match status" value="1"/>
</dbReference>
<dbReference type="InterPro" id="IPR001737">
    <property type="entry name" value="KsgA/Erm"/>
</dbReference>
<dbReference type="InterPro" id="IPR023165">
    <property type="entry name" value="rRNA_Ade_diMease-like_C"/>
</dbReference>
<dbReference type="InterPro" id="IPR020596">
    <property type="entry name" value="rRNA_Ade_Mease_Trfase_CS"/>
</dbReference>
<dbReference type="InterPro" id="IPR020598">
    <property type="entry name" value="rRNA_Ade_methylase_Trfase_N"/>
</dbReference>
<dbReference type="InterPro" id="IPR011530">
    <property type="entry name" value="rRNA_adenine_dimethylase"/>
</dbReference>
<dbReference type="InterPro" id="IPR029063">
    <property type="entry name" value="SAM-dependent_MTases_sf"/>
</dbReference>
<dbReference type="NCBIfam" id="TIGR00755">
    <property type="entry name" value="ksgA"/>
    <property type="match status" value="1"/>
</dbReference>
<dbReference type="PANTHER" id="PTHR11727">
    <property type="entry name" value="DIMETHYLADENOSINE TRANSFERASE"/>
    <property type="match status" value="1"/>
</dbReference>
<dbReference type="PANTHER" id="PTHR11727:SF7">
    <property type="entry name" value="DIMETHYLADENOSINE TRANSFERASE-RELATED"/>
    <property type="match status" value="1"/>
</dbReference>
<dbReference type="Pfam" id="PF00398">
    <property type="entry name" value="RrnaAD"/>
    <property type="match status" value="1"/>
</dbReference>
<dbReference type="SMART" id="SM00650">
    <property type="entry name" value="rADc"/>
    <property type="match status" value="1"/>
</dbReference>
<dbReference type="SUPFAM" id="SSF53335">
    <property type="entry name" value="S-adenosyl-L-methionine-dependent methyltransferases"/>
    <property type="match status" value="1"/>
</dbReference>
<dbReference type="PROSITE" id="PS01131">
    <property type="entry name" value="RRNA_A_DIMETH"/>
    <property type="match status" value="1"/>
</dbReference>
<dbReference type="PROSITE" id="PS51689">
    <property type="entry name" value="SAM_RNA_A_N6_MT"/>
    <property type="match status" value="1"/>
</dbReference>
<comment type="function">
    <text evidence="1">Specifically dimethylates two adjacent adenosines (A1518 and A1519) in the loop of a conserved hairpin near the 3'-end of 16S rRNA in the 30S particle. May play a critical role in biogenesis of 30S subunits.</text>
</comment>
<comment type="catalytic activity">
    <reaction evidence="1">
        <text>adenosine(1518)/adenosine(1519) in 16S rRNA + 4 S-adenosyl-L-methionine = N(6)-dimethyladenosine(1518)/N(6)-dimethyladenosine(1519) in 16S rRNA + 4 S-adenosyl-L-homocysteine + 4 H(+)</text>
        <dbReference type="Rhea" id="RHEA:19609"/>
        <dbReference type="Rhea" id="RHEA-COMP:10232"/>
        <dbReference type="Rhea" id="RHEA-COMP:10233"/>
        <dbReference type="ChEBI" id="CHEBI:15378"/>
        <dbReference type="ChEBI" id="CHEBI:57856"/>
        <dbReference type="ChEBI" id="CHEBI:59789"/>
        <dbReference type="ChEBI" id="CHEBI:74411"/>
        <dbReference type="ChEBI" id="CHEBI:74493"/>
        <dbReference type="EC" id="2.1.1.182"/>
    </reaction>
</comment>
<comment type="subcellular location">
    <subcellularLocation>
        <location evidence="1">Cytoplasm</location>
    </subcellularLocation>
</comment>
<comment type="similarity">
    <text evidence="1">Belongs to the class I-like SAM-binding methyltransferase superfamily. rRNA adenine N(6)-methyltransferase family. RsmA subfamily.</text>
</comment>
<reference key="1">
    <citation type="submission" date="2008-02" db="EMBL/GenBank/DDBJ databases">
        <title>Complete sequence of Haemophilus somnus 2336.</title>
        <authorList>
            <consortium name="US DOE Joint Genome Institute"/>
            <person name="Siddaramappa S."/>
            <person name="Duncan A.J."/>
            <person name="Challacombe J.F."/>
            <person name="Rainey D."/>
            <person name="Gillaspy A.F."/>
            <person name="Carson M."/>
            <person name="Gipson J."/>
            <person name="Gipson M."/>
            <person name="Bruce D."/>
            <person name="Detter J.C."/>
            <person name="Han C.S."/>
            <person name="Land M."/>
            <person name="Tapia R."/>
            <person name="Thompson L.S."/>
            <person name="Orvis J."/>
            <person name="Zaitshik J."/>
            <person name="Barnes G."/>
            <person name="Brettin T.S."/>
            <person name="Dyer D.W."/>
            <person name="Inzana T.J."/>
        </authorList>
    </citation>
    <scope>NUCLEOTIDE SEQUENCE [LARGE SCALE GENOMIC DNA]</scope>
    <source>
        <strain>2336</strain>
    </source>
</reference>
<organism>
    <name type="scientific">Histophilus somni (strain 2336)</name>
    <name type="common">Haemophilus somnus</name>
    <dbReference type="NCBI Taxonomy" id="228400"/>
    <lineage>
        <taxon>Bacteria</taxon>
        <taxon>Pseudomonadati</taxon>
        <taxon>Pseudomonadota</taxon>
        <taxon>Gammaproteobacteria</taxon>
        <taxon>Pasteurellales</taxon>
        <taxon>Pasteurellaceae</taxon>
        <taxon>Histophilus</taxon>
    </lineage>
</organism>
<accession>B0URM7</accession>
<proteinExistence type="inferred from homology"/>
<gene>
    <name evidence="1" type="primary">rsmA</name>
    <name evidence="1" type="synonym">ksgA</name>
    <name type="ordered locus">HSM_0465</name>
</gene>
<feature type="chain" id="PRO_1000082554" description="Ribosomal RNA small subunit methyltransferase A">
    <location>
        <begin position="1"/>
        <end position="281"/>
    </location>
</feature>
<feature type="binding site" evidence="1">
    <location>
        <position position="18"/>
    </location>
    <ligand>
        <name>S-adenosyl-L-methionine</name>
        <dbReference type="ChEBI" id="CHEBI:59789"/>
    </ligand>
</feature>
<feature type="binding site" evidence="1">
    <location>
        <position position="20"/>
    </location>
    <ligand>
        <name>S-adenosyl-L-methionine</name>
        <dbReference type="ChEBI" id="CHEBI:59789"/>
    </ligand>
</feature>
<feature type="binding site" evidence="1">
    <location>
        <position position="45"/>
    </location>
    <ligand>
        <name>S-adenosyl-L-methionine</name>
        <dbReference type="ChEBI" id="CHEBI:59789"/>
    </ligand>
</feature>
<feature type="binding site" evidence="1">
    <location>
        <position position="66"/>
    </location>
    <ligand>
        <name>S-adenosyl-L-methionine</name>
        <dbReference type="ChEBI" id="CHEBI:59789"/>
    </ligand>
</feature>
<feature type="binding site" evidence="1">
    <location>
        <position position="91"/>
    </location>
    <ligand>
        <name>S-adenosyl-L-methionine</name>
        <dbReference type="ChEBI" id="CHEBI:59789"/>
    </ligand>
</feature>
<feature type="binding site" evidence="1">
    <location>
        <position position="118"/>
    </location>
    <ligand>
        <name>S-adenosyl-L-methionine</name>
        <dbReference type="ChEBI" id="CHEBI:59789"/>
    </ligand>
</feature>
<evidence type="ECO:0000255" key="1">
    <source>
        <dbReference type="HAMAP-Rule" id="MF_00607"/>
    </source>
</evidence>
<protein>
    <recommendedName>
        <fullName evidence="1">Ribosomal RNA small subunit methyltransferase A</fullName>
        <ecNumber evidence="1">2.1.1.182</ecNumber>
    </recommendedName>
    <alternativeName>
        <fullName evidence="1">16S rRNA (adenine(1518)-N(6)/adenine(1519)-N(6))-dimethyltransferase</fullName>
    </alternativeName>
    <alternativeName>
        <fullName evidence="1">16S rRNA dimethyladenosine transferase</fullName>
    </alternativeName>
    <alternativeName>
        <fullName evidence="1">16S rRNA dimethylase</fullName>
    </alternativeName>
    <alternativeName>
        <fullName evidence="1">S-adenosylmethionine-6-N', N'-adenosyl(rRNA) dimethyltransferase</fullName>
    </alternativeName>
</protein>
<name>RSMA_HISS2</name>
<sequence>MKSKTHLGHTARKRFGQNFLHDNNIIQNIVMAIYPQKEQFLVEIGPGLGALTEPVAEKVERLTVIELDRDLAERLRHHPFLHQKLNVIEYDAMQFNFEQLYIDENLAEKNQKLRVFGNLPYNISTPLMFHLFKYHAIIQDMHFMLQKEVVKRLCAAPNSKAYGRLTIMAQYFCQVLPVLEVPPTAFKPAPKVESAVVRLIPHKELPYPVKDLYWLNRVTTQAFNQRRKTLRNALSTLFSAEKLTALAIDLEARAENLSIADYARLANYLADNPPTEDLQSE</sequence>